<proteinExistence type="inferred from homology"/>
<sequence>MNIFVTGTNTDIGKTYVTKYLYKALRTRGYRVCIFKPFQTEEIGGGRYPDLEIYKNECDLDYDVTSLYTFKDPVSPHLAFKIERHQQLNHQTMIDKLESLKAQFDMILIEGAGGIAVPIYEYSDHFYMTTDLIKDTSDFIVSVLPSKLGAINDAIVHQKYIDHQELPPNVLIMNNYTDSAIEQDNLHTIEKLIHKSVYTLGHQATQESFSEAFIQRIIGGSNG</sequence>
<gene>
    <name evidence="1" type="primary">bioD</name>
    <name type="ordered locus">SERP2396</name>
</gene>
<comment type="function">
    <text evidence="1">Catalyzes a mechanistically unusual reaction, the ATP-dependent insertion of CO2 between the N7 and N8 nitrogen atoms of 7,8-diaminopelargonic acid (DAPA, also called 7,8-diammoniononanoate) to form a ureido ring.</text>
</comment>
<comment type="catalytic activity">
    <reaction evidence="1">
        <text>(7R,8S)-7,8-diammoniononanoate + CO2 + ATP = (4R,5S)-dethiobiotin + ADP + phosphate + 3 H(+)</text>
        <dbReference type="Rhea" id="RHEA:15805"/>
        <dbReference type="ChEBI" id="CHEBI:15378"/>
        <dbReference type="ChEBI" id="CHEBI:16526"/>
        <dbReference type="ChEBI" id="CHEBI:30616"/>
        <dbReference type="ChEBI" id="CHEBI:43474"/>
        <dbReference type="ChEBI" id="CHEBI:149469"/>
        <dbReference type="ChEBI" id="CHEBI:149473"/>
        <dbReference type="ChEBI" id="CHEBI:456216"/>
        <dbReference type="EC" id="6.3.3.3"/>
    </reaction>
</comment>
<comment type="cofactor">
    <cofactor evidence="1">
        <name>Mg(2+)</name>
        <dbReference type="ChEBI" id="CHEBI:18420"/>
    </cofactor>
</comment>
<comment type="pathway">
    <text evidence="1">Cofactor biosynthesis; biotin biosynthesis; biotin from 7,8-diaminononanoate: step 1/2.</text>
</comment>
<comment type="subunit">
    <text evidence="1">Homodimer.</text>
</comment>
<comment type="subcellular location">
    <subcellularLocation>
        <location evidence="1">Cytoplasm</location>
    </subcellularLocation>
</comment>
<comment type="similarity">
    <text evidence="1">Belongs to the dethiobiotin synthetase family.</text>
</comment>
<evidence type="ECO:0000255" key="1">
    <source>
        <dbReference type="HAMAP-Rule" id="MF_00336"/>
    </source>
</evidence>
<keyword id="KW-0067">ATP-binding</keyword>
<keyword id="KW-0093">Biotin biosynthesis</keyword>
<keyword id="KW-0963">Cytoplasm</keyword>
<keyword id="KW-0436">Ligase</keyword>
<keyword id="KW-0460">Magnesium</keyword>
<keyword id="KW-0479">Metal-binding</keyword>
<keyword id="KW-0547">Nucleotide-binding</keyword>
<keyword id="KW-1185">Reference proteome</keyword>
<dbReference type="EC" id="6.3.3.3" evidence="1"/>
<dbReference type="EMBL" id="CP000029">
    <property type="protein sequence ID" value="AAW53237.1"/>
    <property type="molecule type" value="Genomic_DNA"/>
</dbReference>
<dbReference type="RefSeq" id="WP_002469267.1">
    <property type="nucleotide sequence ID" value="NC_002976.3"/>
</dbReference>
<dbReference type="SMR" id="Q5HKF0"/>
<dbReference type="STRING" id="176279.SERP2396"/>
<dbReference type="KEGG" id="ser:SERP2396"/>
<dbReference type="eggNOG" id="COG0132">
    <property type="taxonomic scope" value="Bacteria"/>
</dbReference>
<dbReference type="HOGENOM" id="CLU_072551_3_0_9"/>
<dbReference type="UniPathway" id="UPA00078">
    <property type="reaction ID" value="UER00161"/>
</dbReference>
<dbReference type="Proteomes" id="UP000000531">
    <property type="component" value="Chromosome"/>
</dbReference>
<dbReference type="GO" id="GO:0005829">
    <property type="term" value="C:cytosol"/>
    <property type="evidence" value="ECO:0007669"/>
    <property type="project" value="TreeGrafter"/>
</dbReference>
<dbReference type="GO" id="GO:0005524">
    <property type="term" value="F:ATP binding"/>
    <property type="evidence" value="ECO:0007669"/>
    <property type="project" value="UniProtKB-UniRule"/>
</dbReference>
<dbReference type="GO" id="GO:0004141">
    <property type="term" value="F:dethiobiotin synthase activity"/>
    <property type="evidence" value="ECO:0007669"/>
    <property type="project" value="UniProtKB-UniRule"/>
</dbReference>
<dbReference type="GO" id="GO:0000287">
    <property type="term" value="F:magnesium ion binding"/>
    <property type="evidence" value="ECO:0007669"/>
    <property type="project" value="UniProtKB-UniRule"/>
</dbReference>
<dbReference type="GO" id="GO:0009102">
    <property type="term" value="P:biotin biosynthetic process"/>
    <property type="evidence" value="ECO:0007669"/>
    <property type="project" value="UniProtKB-UniRule"/>
</dbReference>
<dbReference type="CDD" id="cd03109">
    <property type="entry name" value="DTBS"/>
    <property type="match status" value="1"/>
</dbReference>
<dbReference type="Gene3D" id="3.40.50.300">
    <property type="entry name" value="P-loop containing nucleotide triphosphate hydrolases"/>
    <property type="match status" value="1"/>
</dbReference>
<dbReference type="HAMAP" id="MF_00336">
    <property type="entry name" value="BioD"/>
    <property type="match status" value="1"/>
</dbReference>
<dbReference type="InterPro" id="IPR004472">
    <property type="entry name" value="DTB_synth_BioD"/>
</dbReference>
<dbReference type="InterPro" id="IPR027417">
    <property type="entry name" value="P-loop_NTPase"/>
</dbReference>
<dbReference type="NCBIfam" id="TIGR00347">
    <property type="entry name" value="bioD"/>
    <property type="match status" value="1"/>
</dbReference>
<dbReference type="PANTHER" id="PTHR43210:SF2">
    <property type="entry name" value="ATP-DEPENDENT DETHIOBIOTIN SYNTHETASE BIOD 2"/>
    <property type="match status" value="1"/>
</dbReference>
<dbReference type="PANTHER" id="PTHR43210">
    <property type="entry name" value="DETHIOBIOTIN SYNTHETASE"/>
    <property type="match status" value="1"/>
</dbReference>
<dbReference type="Pfam" id="PF13500">
    <property type="entry name" value="AAA_26"/>
    <property type="match status" value="1"/>
</dbReference>
<dbReference type="PIRSF" id="PIRSF006755">
    <property type="entry name" value="DTB_synth"/>
    <property type="match status" value="1"/>
</dbReference>
<dbReference type="SUPFAM" id="SSF52540">
    <property type="entry name" value="P-loop containing nucleoside triphosphate hydrolases"/>
    <property type="match status" value="1"/>
</dbReference>
<name>BIOD_STAEQ</name>
<protein>
    <recommendedName>
        <fullName evidence="1">ATP-dependent dethiobiotin synthetase BioD</fullName>
        <ecNumber evidence="1">6.3.3.3</ecNumber>
    </recommendedName>
    <alternativeName>
        <fullName evidence="1">DTB synthetase</fullName>
        <shortName evidence="1">DTBS</shortName>
    </alternativeName>
    <alternativeName>
        <fullName evidence="1">Dethiobiotin synthase</fullName>
    </alternativeName>
</protein>
<organism>
    <name type="scientific">Staphylococcus epidermidis (strain ATCC 35984 / DSM 28319 / BCRC 17069 / CCUG 31568 / BM 3577 / RP62A)</name>
    <dbReference type="NCBI Taxonomy" id="176279"/>
    <lineage>
        <taxon>Bacteria</taxon>
        <taxon>Bacillati</taxon>
        <taxon>Bacillota</taxon>
        <taxon>Bacilli</taxon>
        <taxon>Bacillales</taxon>
        <taxon>Staphylococcaceae</taxon>
        <taxon>Staphylococcus</taxon>
    </lineage>
</organism>
<accession>Q5HKF0</accession>
<reference key="1">
    <citation type="journal article" date="2005" name="J. Bacteriol.">
        <title>Insights on evolution of virulence and resistance from the complete genome analysis of an early methicillin-resistant Staphylococcus aureus strain and a biofilm-producing methicillin-resistant Staphylococcus epidermidis strain.</title>
        <authorList>
            <person name="Gill S.R."/>
            <person name="Fouts D.E."/>
            <person name="Archer G.L."/>
            <person name="Mongodin E.F."/>
            <person name="DeBoy R.T."/>
            <person name="Ravel J."/>
            <person name="Paulsen I.T."/>
            <person name="Kolonay J.F."/>
            <person name="Brinkac L.M."/>
            <person name="Beanan M.J."/>
            <person name="Dodson R.J."/>
            <person name="Daugherty S.C."/>
            <person name="Madupu R."/>
            <person name="Angiuoli S.V."/>
            <person name="Durkin A.S."/>
            <person name="Haft D.H."/>
            <person name="Vamathevan J.J."/>
            <person name="Khouri H."/>
            <person name="Utterback T.R."/>
            <person name="Lee C."/>
            <person name="Dimitrov G."/>
            <person name="Jiang L."/>
            <person name="Qin H."/>
            <person name="Weidman J."/>
            <person name="Tran K."/>
            <person name="Kang K.H."/>
            <person name="Hance I.R."/>
            <person name="Nelson K.E."/>
            <person name="Fraser C.M."/>
        </authorList>
    </citation>
    <scope>NUCLEOTIDE SEQUENCE [LARGE SCALE GENOMIC DNA]</scope>
    <source>
        <strain>ATCC 35984 / DSM 28319 / BCRC 17069 / CCUG 31568 / BM 3577 / RP62A</strain>
    </source>
</reference>
<feature type="chain" id="PRO_0000187990" description="ATP-dependent dethiobiotin synthetase BioD">
    <location>
        <begin position="1"/>
        <end position="223"/>
    </location>
</feature>
<feature type="active site" evidence="1">
    <location>
        <position position="36"/>
    </location>
</feature>
<feature type="binding site" evidence="1">
    <location>
        <begin position="11"/>
        <end position="16"/>
    </location>
    <ligand>
        <name>ATP</name>
        <dbReference type="ChEBI" id="CHEBI:30616"/>
    </ligand>
</feature>
<feature type="binding site" evidence="1">
    <location>
        <position position="15"/>
    </location>
    <ligand>
        <name>Mg(2+)</name>
        <dbReference type="ChEBI" id="CHEBI:18420"/>
    </ligand>
</feature>
<feature type="binding site" evidence="1">
    <location>
        <position position="40"/>
    </location>
    <ligand>
        <name>substrate</name>
    </ligand>
</feature>
<feature type="binding site" evidence="1">
    <location>
        <position position="50"/>
    </location>
    <ligand>
        <name>ATP</name>
        <dbReference type="ChEBI" id="CHEBI:30616"/>
    </ligand>
</feature>
<feature type="binding site" evidence="1">
    <location>
        <position position="50"/>
    </location>
    <ligand>
        <name>Mg(2+)</name>
        <dbReference type="ChEBI" id="CHEBI:18420"/>
    </ligand>
</feature>
<feature type="binding site" evidence="1">
    <location>
        <begin position="110"/>
        <end position="113"/>
    </location>
    <ligand>
        <name>ATP</name>
        <dbReference type="ChEBI" id="CHEBI:30616"/>
    </ligand>
</feature>
<feature type="binding site" evidence="1">
    <location>
        <position position="110"/>
    </location>
    <ligand>
        <name>Mg(2+)</name>
        <dbReference type="ChEBI" id="CHEBI:18420"/>
    </ligand>
</feature>
<feature type="binding site" evidence="1">
    <location>
        <begin position="174"/>
        <end position="175"/>
    </location>
    <ligand>
        <name>ATP</name>
        <dbReference type="ChEBI" id="CHEBI:30616"/>
    </ligand>
</feature>